<sequence length="243" mass="27415">MNASQDTIYAQVSEHISDFQFDSRVAGVFSDMIRRSVPGYTQIINTIGDFADRFVKPNTQVYDLGCSLGAATLSIRRQIQGRDCRIVAVDNSESMVIRCQENLNAYVSDTEVELICGDIRDIHIENASLVVLNFTLQFLPPEDRDALIAKIYQGLNPGGLLVLSEKIRFDDAPIQSVLEELHLDFKRANGYSELEISQKRSALENVMKPDTLSTHQQRLTHQGFSHFSTWFQCFNFASMVAIK</sequence>
<gene>
    <name evidence="1" type="primary">cmoA</name>
    <name type="ordered locus">SO_2435</name>
</gene>
<dbReference type="EC" id="2.1.3.-" evidence="1"/>
<dbReference type="EMBL" id="AE014299">
    <property type="protein sequence ID" value="AAN55469.1"/>
    <property type="molecule type" value="Genomic_DNA"/>
</dbReference>
<dbReference type="RefSeq" id="NP_718025.1">
    <property type="nucleotide sequence ID" value="NC_004347.2"/>
</dbReference>
<dbReference type="RefSeq" id="WP_011072410.1">
    <property type="nucleotide sequence ID" value="NC_004347.2"/>
</dbReference>
<dbReference type="SMR" id="Q8EEE7"/>
<dbReference type="STRING" id="211586.SO_2435"/>
<dbReference type="PaxDb" id="211586-SO_2435"/>
<dbReference type="KEGG" id="son:SO_2435"/>
<dbReference type="PATRIC" id="fig|211586.12.peg.2342"/>
<dbReference type="eggNOG" id="COG2226">
    <property type="taxonomic scope" value="Bacteria"/>
</dbReference>
<dbReference type="HOGENOM" id="CLU_078475_0_0_6"/>
<dbReference type="OrthoDB" id="9779941at2"/>
<dbReference type="PhylomeDB" id="Q8EEE7"/>
<dbReference type="BioCyc" id="SONE211586:G1GMP-2225-MONOMER"/>
<dbReference type="Proteomes" id="UP000008186">
    <property type="component" value="Chromosome"/>
</dbReference>
<dbReference type="GO" id="GO:0016743">
    <property type="term" value="F:carboxyl- or carbamoyltransferase activity"/>
    <property type="evidence" value="ECO:0007669"/>
    <property type="project" value="UniProtKB-UniRule"/>
</dbReference>
<dbReference type="GO" id="GO:1904047">
    <property type="term" value="F:S-adenosyl-L-methionine binding"/>
    <property type="evidence" value="ECO:0007669"/>
    <property type="project" value="UniProtKB-UniRule"/>
</dbReference>
<dbReference type="GO" id="GO:0002098">
    <property type="term" value="P:tRNA wobble uridine modification"/>
    <property type="evidence" value="ECO:0007669"/>
    <property type="project" value="InterPro"/>
</dbReference>
<dbReference type="CDD" id="cd02440">
    <property type="entry name" value="AdoMet_MTases"/>
    <property type="match status" value="1"/>
</dbReference>
<dbReference type="Gene3D" id="3.40.50.150">
    <property type="entry name" value="Vaccinia Virus protein VP39"/>
    <property type="match status" value="1"/>
</dbReference>
<dbReference type="HAMAP" id="MF_01589">
    <property type="entry name" value="Cx_SAM_synthase"/>
    <property type="match status" value="1"/>
</dbReference>
<dbReference type="InterPro" id="IPR005271">
    <property type="entry name" value="CmoA"/>
</dbReference>
<dbReference type="InterPro" id="IPR041698">
    <property type="entry name" value="Methyltransf_25"/>
</dbReference>
<dbReference type="InterPro" id="IPR029063">
    <property type="entry name" value="SAM-dependent_MTases_sf"/>
</dbReference>
<dbReference type="NCBIfam" id="TIGR00740">
    <property type="entry name" value="carboxy-S-adenosyl-L-methionine synthase CmoA"/>
    <property type="match status" value="1"/>
</dbReference>
<dbReference type="NCBIfam" id="NF011995">
    <property type="entry name" value="PRK15451.1"/>
    <property type="match status" value="1"/>
</dbReference>
<dbReference type="PANTHER" id="PTHR43861:SF2">
    <property type="entry name" value="CARBOXY-S-ADENOSYL-L-METHIONINE SYNTHASE"/>
    <property type="match status" value="1"/>
</dbReference>
<dbReference type="PANTHER" id="PTHR43861">
    <property type="entry name" value="TRANS-ACONITATE 2-METHYLTRANSFERASE-RELATED"/>
    <property type="match status" value="1"/>
</dbReference>
<dbReference type="Pfam" id="PF13649">
    <property type="entry name" value="Methyltransf_25"/>
    <property type="match status" value="1"/>
</dbReference>
<dbReference type="PIRSF" id="PIRSF006325">
    <property type="entry name" value="MeTrfase_bac"/>
    <property type="match status" value="1"/>
</dbReference>
<dbReference type="SUPFAM" id="SSF53335">
    <property type="entry name" value="S-adenosyl-L-methionine-dependent methyltransferases"/>
    <property type="match status" value="1"/>
</dbReference>
<organism>
    <name type="scientific">Shewanella oneidensis (strain ATCC 700550 / JCM 31522 / CIP 106686 / LMG 19005 / NCIMB 14063 / MR-1)</name>
    <dbReference type="NCBI Taxonomy" id="211586"/>
    <lineage>
        <taxon>Bacteria</taxon>
        <taxon>Pseudomonadati</taxon>
        <taxon>Pseudomonadota</taxon>
        <taxon>Gammaproteobacteria</taxon>
        <taxon>Alteromonadales</taxon>
        <taxon>Shewanellaceae</taxon>
        <taxon>Shewanella</taxon>
    </lineage>
</organism>
<keyword id="KW-1185">Reference proteome</keyword>
<keyword id="KW-0949">S-adenosyl-L-methionine</keyword>
<keyword id="KW-0808">Transferase</keyword>
<accession>Q8EEE7</accession>
<evidence type="ECO:0000255" key="1">
    <source>
        <dbReference type="HAMAP-Rule" id="MF_01589"/>
    </source>
</evidence>
<comment type="function">
    <text evidence="1">Catalyzes the conversion of S-adenosyl-L-methionine (SAM) to carboxy-S-adenosyl-L-methionine (Cx-SAM).</text>
</comment>
<comment type="catalytic activity">
    <reaction evidence="1">
        <text>prephenate + S-adenosyl-L-methionine = carboxy-S-adenosyl-L-methionine + 3-phenylpyruvate + H2O</text>
        <dbReference type="Rhea" id="RHEA:51692"/>
        <dbReference type="ChEBI" id="CHEBI:15377"/>
        <dbReference type="ChEBI" id="CHEBI:18005"/>
        <dbReference type="ChEBI" id="CHEBI:29934"/>
        <dbReference type="ChEBI" id="CHEBI:59789"/>
        <dbReference type="ChEBI" id="CHEBI:134278"/>
    </reaction>
</comment>
<comment type="subunit">
    <text evidence="1">Homodimer.</text>
</comment>
<comment type="similarity">
    <text evidence="1">Belongs to the class I-like SAM-binding methyltransferase superfamily. Cx-SAM synthase family.</text>
</comment>
<name>CMOA_SHEON</name>
<proteinExistence type="inferred from homology"/>
<reference key="1">
    <citation type="journal article" date="2002" name="Nat. Biotechnol.">
        <title>Genome sequence of the dissimilatory metal ion-reducing bacterium Shewanella oneidensis.</title>
        <authorList>
            <person name="Heidelberg J.F."/>
            <person name="Paulsen I.T."/>
            <person name="Nelson K.E."/>
            <person name="Gaidos E.J."/>
            <person name="Nelson W.C."/>
            <person name="Read T.D."/>
            <person name="Eisen J.A."/>
            <person name="Seshadri R."/>
            <person name="Ward N.L."/>
            <person name="Methe B.A."/>
            <person name="Clayton R.A."/>
            <person name="Meyer T."/>
            <person name="Tsapin A."/>
            <person name="Scott J."/>
            <person name="Beanan M.J."/>
            <person name="Brinkac L.M."/>
            <person name="Daugherty S.C."/>
            <person name="DeBoy R.T."/>
            <person name="Dodson R.J."/>
            <person name="Durkin A.S."/>
            <person name="Haft D.H."/>
            <person name="Kolonay J.F."/>
            <person name="Madupu R."/>
            <person name="Peterson J.D."/>
            <person name="Umayam L.A."/>
            <person name="White O."/>
            <person name="Wolf A.M."/>
            <person name="Vamathevan J.J."/>
            <person name="Weidman J.F."/>
            <person name="Impraim M."/>
            <person name="Lee K."/>
            <person name="Berry K.J."/>
            <person name="Lee C."/>
            <person name="Mueller J."/>
            <person name="Khouri H.M."/>
            <person name="Gill J."/>
            <person name="Utterback T.R."/>
            <person name="McDonald L.A."/>
            <person name="Feldblyum T.V."/>
            <person name="Smith H.O."/>
            <person name="Venter J.C."/>
            <person name="Nealson K.H."/>
            <person name="Fraser C.M."/>
        </authorList>
    </citation>
    <scope>NUCLEOTIDE SEQUENCE [LARGE SCALE GENOMIC DNA]</scope>
    <source>
        <strain>ATCC 700550 / JCM 31522 / CIP 106686 / LMG 19005 / NCIMB 14063 / MR-1</strain>
    </source>
</reference>
<protein>
    <recommendedName>
        <fullName evidence="1">Carboxy-S-adenosyl-L-methionine synthase</fullName>
        <shortName evidence="1">Cx-SAM synthase</shortName>
        <ecNumber evidence="1">2.1.3.-</ecNumber>
    </recommendedName>
</protein>
<feature type="chain" id="PRO_0000314381" description="Carboxy-S-adenosyl-L-methionine synthase">
    <location>
        <begin position="1"/>
        <end position="243"/>
    </location>
</feature>
<feature type="binding site" evidence="1">
    <location>
        <position position="40"/>
    </location>
    <ligand>
        <name>S-adenosyl-L-methionine</name>
        <dbReference type="ChEBI" id="CHEBI:59789"/>
    </ligand>
</feature>
<feature type="binding site" evidence="1">
    <location>
        <begin position="65"/>
        <end position="67"/>
    </location>
    <ligand>
        <name>S-adenosyl-L-methionine</name>
        <dbReference type="ChEBI" id="CHEBI:59789"/>
    </ligand>
</feature>
<feature type="binding site" evidence="1">
    <location>
        <begin position="90"/>
        <end position="91"/>
    </location>
    <ligand>
        <name>S-adenosyl-L-methionine</name>
        <dbReference type="ChEBI" id="CHEBI:59789"/>
    </ligand>
</feature>
<feature type="binding site" evidence="1">
    <location>
        <begin position="118"/>
        <end position="119"/>
    </location>
    <ligand>
        <name>S-adenosyl-L-methionine</name>
        <dbReference type="ChEBI" id="CHEBI:59789"/>
    </ligand>
</feature>
<feature type="binding site" evidence="1">
    <location>
        <position position="133"/>
    </location>
    <ligand>
        <name>S-adenosyl-L-methionine</name>
        <dbReference type="ChEBI" id="CHEBI:59789"/>
    </ligand>
</feature>
<feature type="binding site" evidence="1">
    <location>
        <position position="200"/>
    </location>
    <ligand>
        <name>S-adenosyl-L-methionine</name>
        <dbReference type="ChEBI" id="CHEBI:59789"/>
    </ligand>
</feature>